<proteinExistence type="inferred from homology"/>
<protein>
    <recommendedName>
        <fullName evidence="1">S-adenosylmethionine:tRNA ribosyltransferase-isomerase</fullName>
        <ecNumber evidence="1">2.4.99.17</ecNumber>
    </recommendedName>
    <alternativeName>
        <fullName evidence="1">Queuosine biosynthesis protein QueA</fullName>
    </alternativeName>
</protein>
<reference key="1">
    <citation type="submission" date="2007-03" db="EMBL/GenBank/DDBJ databases">
        <title>Complete sequence of Prosthecochloris vibrioformis DSM 265.</title>
        <authorList>
            <consortium name="US DOE Joint Genome Institute"/>
            <person name="Copeland A."/>
            <person name="Lucas S."/>
            <person name="Lapidus A."/>
            <person name="Barry K."/>
            <person name="Detter J.C."/>
            <person name="Glavina del Rio T."/>
            <person name="Hammon N."/>
            <person name="Israni S."/>
            <person name="Pitluck S."/>
            <person name="Schmutz J."/>
            <person name="Larimer F."/>
            <person name="Land M."/>
            <person name="Hauser L."/>
            <person name="Mikhailova N."/>
            <person name="Li T."/>
            <person name="Overmann J."/>
            <person name="Schuster S.C."/>
            <person name="Bryant D.A."/>
            <person name="Richardson P."/>
        </authorList>
    </citation>
    <scope>NUCLEOTIDE SEQUENCE [LARGE SCALE GENOMIC DNA]</scope>
    <source>
        <strain>DSM 265 / 1930</strain>
    </source>
</reference>
<gene>
    <name evidence="1" type="primary">queA</name>
    <name type="ordered locus">Cvib_0597</name>
</gene>
<feature type="chain" id="PRO_1000076013" description="S-adenosylmethionine:tRNA ribosyltransferase-isomerase">
    <location>
        <begin position="1"/>
        <end position="341"/>
    </location>
</feature>
<keyword id="KW-0963">Cytoplasm</keyword>
<keyword id="KW-0671">Queuosine biosynthesis</keyword>
<keyword id="KW-0949">S-adenosyl-L-methionine</keyword>
<keyword id="KW-0808">Transferase</keyword>
<dbReference type="EC" id="2.4.99.17" evidence="1"/>
<dbReference type="EMBL" id="CP000607">
    <property type="protein sequence ID" value="ABP36619.1"/>
    <property type="molecule type" value="Genomic_DNA"/>
</dbReference>
<dbReference type="SMR" id="A4SDR0"/>
<dbReference type="STRING" id="290318.Cvib_0597"/>
<dbReference type="KEGG" id="pvi:Cvib_0597"/>
<dbReference type="eggNOG" id="COG0809">
    <property type="taxonomic scope" value="Bacteria"/>
</dbReference>
<dbReference type="HOGENOM" id="CLU_039110_1_0_10"/>
<dbReference type="OrthoDB" id="9805933at2"/>
<dbReference type="UniPathway" id="UPA00392"/>
<dbReference type="GO" id="GO:0005737">
    <property type="term" value="C:cytoplasm"/>
    <property type="evidence" value="ECO:0007669"/>
    <property type="project" value="UniProtKB-SubCell"/>
</dbReference>
<dbReference type="GO" id="GO:0051075">
    <property type="term" value="F:S-adenosylmethionine:tRNA ribosyltransferase-isomerase activity"/>
    <property type="evidence" value="ECO:0007669"/>
    <property type="project" value="UniProtKB-EC"/>
</dbReference>
<dbReference type="GO" id="GO:0008616">
    <property type="term" value="P:queuosine biosynthetic process"/>
    <property type="evidence" value="ECO:0007669"/>
    <property type="project" value="UniProtKB-UniRule"/>
</dbReference>
<dbReference type="GO" id="GO:0002099">
    <property type="term" value="P:tRNA wobble guanine modification"/>
    <property type="evidence" value="ECO:0007669"/>
    <property type="project" value="TreeGrafter"/>
</dbReference>
<dbReference type="Gene3D" id="2.40.10.240">
    <property type="entry name" value="QueA-like"/>
    <property type="match status" value="1"/>
</dbReference>
<dbReference type="Gene3D" id="3.40.1780.10">
    <property type="entry name" value="QueA-like"/>
    <property type="match status" value="1"/>
</dbReference>
<dbReference type="HAMAP" id="MF_00113">
    <property type="entry name" value="QueA"/>
    <property type="match status" value="1"/>
</dbReference>
<dbReference type="InterPro" id="IPR003699">
    <property type="entry name" value="QueA"/>
</dbReference>
<dbReference type="InterPro" id="IPR042118">
    <property type="entry name" value="QueA_dom1"/>
</dbReference>
<dbReference type="InterPro" id="IPR042119">
    <property type="entry name" value="QueA_dom2"/>
</dbReference>
<dbReference type="InterPro" id="IPR036100">
    <property type="entry name" value="QueA_sf"/>
</dbReference>
<dbReference type="NCBIfam" id="NF001140">
    <property type="entry name" value="PRK00147.1"/>
    <property type="match status" value="1"/>
</dbReference>
<dbReference type="NCBIfam" id="TIGR00113">
    <property type="entry name" value="queA"/>
    <property type="match status" value="1"/>
</dbReference>
<dbReference type="PANTHER" id="PTHR30307">
    <property type="entry name" value="S-ADENOSYLMETHIONINE:TRNA RIBOSYLTRANSFERASE-ISOMERASE"/>
    <property type="match status" value="1"/>
</dbReference>
<dbReference type="PANTHER" id="PTHR30307:SF0">
    <property type="entry name" value="S-ADENOSYLMETHIONINE:TRNA RIBOSYLTRANSFERASE-ISOMERASE"/>
    <property type="match status" value="1"/>
</dbReference>
<dbReference type="Pfam" id="PF02547">
    <property type="entry name" value="Queuosine_synth"/>
    <property type="match status" value="1"/>
</dbReference>
<dbReference type="SUPFAM" id="SSF111337">
    <property type="entry name" value="QueA-like"/>
    <property type="match status" value="1"/>
</dbReference>
<comment type="function">
    <text evidence="1">Transfers and isomerizes the ribose moiety from AdoMet to the 7-aminomethyl group of 7-deazaguanine (preQ1-tRNA) to give epoxyqueuosine (oQ-tRNA).</text>
</comment>
<comment type="catalytic activity">
    <reaction evidence="1">
        <text>7-aminomethyl-7-carbaguanosine(34) in tRNA + S-adenosyl-L-methionine = epoxyqueuosine(34) in tRNA + adenine + L-methionine + 2 H(+)</text>
        <dbReference type="Rhea" id="RHEA:32155"/>
        <dbReference type="Rhea" id="RHEA-COMP:10342"/>
        <dbReference type="Rhea" id="RHEA-COMP:18582"/>
        <dbReference type="ChEBI" id="CHEBI:15378"/>
        <dbReference type="ChEBI" id="CHEBI:16708"/>
        <dbReference type="ChEBI" id="CHEBI:57844"/>
        <dbReference type="ChEBI" id="CHEBI:59789"/>
        <dbReference type="ChEBI" id="CHEBI:82833"/>
        <dbReference type="ChEBI" id="CHEBI:194443"/>
        <dbReference type="EC" id="2.4.99.17"/>
    </reaction>
</comment>
<comment type="pathway">
    <text evidence="1">tRNA modification; tRNA-queuosine biosynthesis.</text>
</comment>
<comment type="subunit">
    <text evidence="1">Monomer.</text>
</comment>
<comment type="subcellular location">
    <subcellularLocation>
        <location evidence="1">Cytoplasm</location>
    </subcellularLocation>
</comment>
<comment type="similarity">
    <text evidence="1">Belongs to the QueA family.</text>
</comment>
<organism>
    <name type="scientific">Chlorobium phaeovibrioides (strain DSM 265 / 1930)</name>
    <name type="common">Prosthecochloris vibrioformis (strain DSM 265)</name>
    <dbReference type="NCBI Taxonomy" id="290318"/>
    <lineage>
        <taxon>Bacteria</taxon>
        <taxon>Pseudomonadati</taxon>
        <taxon>Chlorobiota</taxon>
        <taxon>Chlorobiia</taxon>
        <taxon>Chlorobiales</taxon>
        <taxon>Chlorobiaceae</taxon>
        <taxon>Chlorobium/Pelodictyon group</taxon>
        <taxon>Chlorobium</taxon>
    </lineage>
</organism>
<accession>A4SDR0</accession>
<sequence>MKVSDFDYSLPEERIAKYPPDNRGATRLLVLNRHTGSVQHARYSNLEAFLGYGDLLVINTTKVVRARLFAVKQTGAAIELMLLEKHEGPQNLALYRGRLKKGDRLLAHGHELIVEELAGQGVARLSVEGIESVHALFQNHAEVPIPPYLKRDAEAVDRERYQTVFAEHPGSVAAPTASLNMTPELLLKLEKGGVATAVMTLHVGLGTFLPIRTETMEEHVMHREFYSIPARTIEQIHETRRSGGRVVALGTTVTRALEHAATRISAFSGSDPLVGEADIFIHPGYSFQTIDALLTNFHAPRSTVLMLTAAFAGADHLRAAYREAVEKRYDFLSYGDSMLIS</sequence>
<evidence type="ECO:0000255" key="1">
    <source>
        <dbReference type="HAMAP-Rule" id="MF_00113"/>
    </source>
</evidence>
<name>QUEA_CHLPM</name>